<organism>
    <name type="scientific">Xanthomonas oryzae pv. oryzae (strain MAFF 311018)</name>
    <dbReference type="NCBI Taxonomy" id="342109"/>
    <lineage>
        <taxon>Bacteria</taxon>
        <taxon>Pseudomonadati</taxon>
        <taxon>Pseudomonadota</taxon>
        <taxon>Gammaproteobacteria</taxon>
        <taxon>Lysobacterales</taxon>
        <taxon>Lysobacteraceae</taxon>
        <taxon>Xanthomonas</taxon>
    </lineage>
</organism>
<reference key="1">
    <citation type="journal article" date="2005" name="Jpn. Agric. Res. Q.">
        <title>Genome sequence of Xanthomonas oryzae pv. oryzae suggests contribution of large numbers of effector genes and insertion sequences to its race diversity.</title>
        <authorList>
            <person name="Ochiai H."/>
            <person name="Inoue Y."/>
            <person name="Takeya M."/>
            <person name="Sasaki A."/>
            <person name="Kaku H."/>
        </authorList>
    </citation>
    <scope>NUCLEOTIDE SEQUENCE [LARGE SCALE GENOMIC DNA]</scope>
    <source>
        <strain>MAFF 311018</strain>
    </source>
</reference>
<accession>Q2P6V6</accession>
<feature type="chain" id="PRO_0000322973" description="Recombination protein RecR">
    <location>
        <begin position="1"/>
        <end position="197"/>
    </location>
</feature>
<feature type="domain" description="Toprim" evidence="1">
    <location>
        <begin position="78"/>
        <end position="173"/>
    </location>
</feature>
<feature type="zinc finger region" description="C4-type" evidence="1">
    <location>
        <begin position="55"/>
        <end position="70"/>
    </location>
</feature>
<dbReference type="EMBL" id="AP008229">
    <property type="protein sequence ID" value="BAE67721.1"/>
    <property type="molecule type" value="Genomic_DNA"/>
</dbReference>
<dbReference type="RefSeq" id="WP_011257913.1">
    <property type="nucleotide sequence ID" value="NC_007705.1"/>
</dbReference>
<dbReference type="SMR" id="Q2P6V6"/>
<dbReference type="GeneID" id="77338596"/>
<dbReference type="KEGG" id="xom:XOO0966"/>
<dbReference type="HOGENOM" id="CLU_060739_1_2_6"/>
<dbReference type="GO" id="GO:0003677">
    <property type="term" value="F:DNA binding"/>
    <property type="evidence" value="ECO:0007669"/>
    <property type="project" value="UniProtKB-UniRule"/>
</dbReference>
<dbReference type="GO" id="GO:0008270">
    <property type="term" value="F:zinc ion binding"/>
    <property type="evidence" value="ECO:0007669"/>
    <property type="project" value="UniProtKB-KW"/>
</dbReference>
<dbReference type="GO" id="GO:0006310">
    <property type="term" value="P:DNA recombination"/>
    <property type="evidence" value="ECO:0007669"/>
    <property type="project" value="UniProtKB-UniRule"/>
</dbReference>
<dbReference type="GO" id="GO:0006281">
    <property type="term" value="P:DNA repair"/>
    <property type="evidence" value="ECO:0007669"/>
    <property type="project" value="UniProtKB-UniRule"/>
</dbReference>
<dbReference type="CDD" id="cd01025">
    <property type="entry name" value="TOPRIM_recR"/>
    <property type="match status" value="1"/>
</dbReference>
<dbReference type="Gene3D" id="3.40.1360.10">
    <property type="match status" value="1"/>
</dbReference>
<dbReference type="Gene3D" id="6.10.250.240">
    <property type="match status" value="1"/>
</dbReference>
<dbReference type="Gene3D" id="1.10.8.420">
    <property type="entry name" value="RecR Domain 1"/>
    <property type="match status" value="1"/>
</dbReference>
<dbReference type="HAMAP" id="MF_00017">
    <property type="entry name" value="RecR"/>
    <property type="match status" value="1"/>
</dbReference>
<dbReference type="InterPro" id="IPR000093">
    <property type="entry name" value="DNA_Rcmb_RecR"/>
</dbReference>
<dbReference type="InterPro" id="IPR023627">
    <property type="entry name" value="Rcmb_RecR"/>
</dbReference>
<dbReference type="InterPro" id="IPR015967">
    <property type="entry name" value="Rcmb_RecR_Znf"/>
</dbReference>
<dbReference type="InterPro" id="IPR006171">
    <property type="entry name" value="TOPRIM_dom"/>
</dbReference>
<dbReference type="InterPro" id="IPR034137">
    <property type="entry name" value="TOPRIM_RecR"/>
</dbReference>
<dbReference type="NCBIfam" id="TIGR00615">
    <property type="entry name" value="recR"/>
    <property type="match status" value="1"/>
</dbReference>
<dbReference type="PANTHER" id="PTHR30446">
    <property type="entry name" value="RECOMBINATION PROTEIN RECR"/>
    <property type="match status" value="1"/>
</dbReference>
<dbReference type="PANTHER" id="PTHR30446:SF0">
    <property type="entry name" value="RECOMBINATION PROTEIN RECR"/>
    <property type="match status" value="1"/>
</dbReference>
<dbReference type="Pfam" id="PF21175">
    <property type="entry name" value="RecR_C"/>
    <property type="match status" value="1"/>
</dbReference>
<dbReference type="Pfam" id="PF21176">
    <property type="entry name" value="RecR_HhH"/>
    <property type="match status" value="1"/>
</dbReference>
<dbReference type="Pfam" id="PF02132">
    <property type="entry name" value="RecR_ZnF"/>
    <property type="match status" value="1"/>
</dbReference>
<dbReference type="Pfam" id="PF13662">
    <property type="entry name" value="Toprim_4"/>
    <property type="match status" value="1"/>
</dbReference>
<dbReference type="SMART" id="SM00493">
    <property type="entry name" value="TOPRIM"/>
    <property type="match status" value="1"/>
</dbReference>
<dbReference type="SUPFAM" id="SSF111304">
    <property type="entry name" value="Recombination protein RecR"/>
    <property type="match status" value="1"/>
</dbReference>
<dbReference type="PROSITE" id="PS01300">
    <property type="entry name" value="RECR"/>
    <property type="match status" value="1"/>
</dbReference>
<dbReference type="PROSITE" id="PS50880">
    <property type="entry name" value="TOPRIM"/>
    <property type="match status" value="1"/>
</dbReference>
<sequence>MSSLLEQLIEAFRVLPGVGQKSAQRMAYHVLEREREGGRRLATTLANAVEKVGHCVQCRDFTESEICTICASSSRDRQQLCVVESPADRLAIEHATGYRGLYFVLQGRLSPLDGIGPRELGLDRLGERLAAGEVTEMIIATNATVEGEATAHYLAQLARQHAVRPSRLAQGMPLGGELEYVDRGTLSHAFGTRSEVL</sequence>
<protein>
    <recommendedName>
        <fullName evidence="1">Recombination protein RecR</fullName>
    </recommendedName>
</protein>
<evidence type="ECO:0000255" key="1">
    <source>
        <dbReference type="HAMAP-Rule" id="MF_00017"/>
    </source>
</evidence>
<name>RECR_XANOM</name>
<gene>
    <name evidence="1" type="primary">recR</name>
    <name type="ordered locus">XOO0966</name>
</gene>
<keyword id="KW-0227">DNA damage</keyword>
<keyword id="KW-0233">DNA recombination</keyword>
<keyword id="KW-0234">DNA repair</keyword>
<keyword id="KW-0479">Metal-binding</keyword>
<keyword id="KW-0862">Zinc</keyword>
<keyword id="KW-0863">Zinc-finger</keyword>
<proteinExistence type="inferred from homology"/>
<comment type="function">
    <text evidence="1">May play a role in DNA repair. It seems to be involved in an RecBC-independent recombinational process of DNA repair. It may act with RecF and RecO.</text>
</comment>
<comment type="similarity">
    <text evidence="1">Belongs to the RecR family.</text>
</comment>